<protein>
    <recommendedName>
        <fullName evidence="1">Pyridoxal 5'-phosphate synthase subunit PdxS</fullName>
        <shortName evidence="1">PLP synthase subunit PdxS</shortName>
        <ecNumber evidence="1">4.3.3.6</ecNumber>
    </recommendedName>
    <alternativeName>
        <fullName evidence="1">Pdx1</fullName>
    </alternativeName>
</protein>
<gene>
    <name evidence="1" type="primary">pdxS</name>
    <name type="ordered locus">DKAM_0482</name>
</gene>
<sequence length="335" mass="36944">MKLVDAYVFLEELGSLLYKLLEQRDKLREEGYPVPGREVATPLVKYGFVSMLKGGVIMDVTNPEQAIIAEEAGAVGVMVLDKLPYDVRMAGGVARTADVKVIEEVMSSITIPVSAKCRIGHEFEARVLEEVGVDLIDESEVLTPVDEKAHINKWLFKTPFVNGARSLPEALRRIYEGASMIRTKGEPGTGNVAEAVKHIKIVNRDIYMLNGYYRNGDVEAIWVYSKENRVPYELALLTARLGRLPVVNFAAGGIATPADAALMMWLGADGVFVGSGIFKSNDPEARARGIVLATTYWDDPETVLEAQKMVSEKASMLGIDIRRLKPEELMQERGV</sequence>
<accession>B8D3X7</accession>
<evidence type="ECO:0000255" key="1">
    <source>
        <dbReference type="HAMAP-Rule" id="MF_01824"/>
    </source>
</evidence>
<proteinExistence type="inferred from homology"/>
<feature type="chain" id="PRO_1000188223" description="Pyridoxal 5'-phosphate synthase subunit PdxS">
    <location>
        <begin position="1"/>
        <end position="335"/>
    </location>
</feature>
<feature type="active site" description="Schiff-base intermediate with D-ribose 5-phosphate" evidence="1">
    <location>
        <position position="116"/>
    </location>
</feature>
<feature type="binding site" evidence="1">
    <location>
        <position position="59"/>
    </location>
    <ligand>
        <name>D-ribose 5-phosphate</name>
        <dbReference type="ChEBI" id="CHEBI:78346"/>
    </ligand>
</feature>
<feature type="binding site" evidence="1">
    <location>
        <position position="188"/>
    </location>
    <ligand>
        <name>D-ribose 5-phosphate</name>
        <dbReference type="ChEBI" id="CHEBI:78346"/>
    </ligand>
</feature>
<feature type="binding site" evidence="1">
    <location>
        <position position="200"/>
    </location>
    <ligand>
        <name>D-glyceraldehyde 3-phosphate</name>
        <dbReference type="ChEBI" id="CHEBI:59776"/>
    </ligand>
</feature>
<feature type="binding site" evidence="1">
    <location>
        <position position="253"/>
    </location>
    <ligand>
        <name>D-ribose 5-phosphate</name>
        <dbReference type="ChEBI" id="CHEBI:78346"/>
    </ligand>
</feature>
<feature type="binding site" evidence="1">
    <location>
        <begin position="274"/>
        <end position="275"/>
    </location>
    <ligand>
        <name>D-ribose 5-phosphate</name>
        <dbReference type="ChEBI" id="CHEBI:78346"/>
    </ligand>
</feature>
<name>PDXS_DESA1</name>
<reference key="1">
    <citation type="journal article" date="2009" name="J. Bacteriol.">
        <title>Complete genome sequence of the anaerobic, protein-degrading hyperthermophilic crenarchaeon Desulfurococcus kamchatkensis.</title>
        <authorList>
            <person name="Ravin N.V."/>
            <person name="Mardanov A.V."/>
            <person name="Beletsky A.V."/>
            <person name="Kublanov I.V."/>
            <person name="Kolganova T.V."/>
            <person name="Lebedinsky A.V."/>
            <person name="Chernyh N.A."/>
            <person name="Bonch-Osmolovskaya E.A."/>
            <person name="Skryabin K.G."/>
        </authorList>
    </citation>
    <scope>NUCLEOTIDE SEQUENCE [LARGE SCALE GENOMIC DNA]</scope>
    <source>
        <strain>DSM 18924 / JCM 16383 / VKM B-2413 / 1221n</strain>
    </source>
</reference>
<organism>
    <name type="scientific">Desulfurococcus amylolyticus (strain DSM 18924 / JCM 16383 / VKM B-2413 / 1221n)</name>
    <name type="common">Desulfurococcus kamchatkensis</name>
    <dbReference type="NCBI Taxonomy" id="490899"/>
    <lineage>
        <taxon>Archaea</taxon>
        <taxon>Thermoproteota</taxon>
        <taxon>Thermoprotei</taxon>
        <taxon>Desulfurococcales</taxon>
        <taxon>Desulfurococcaceae</taxon>
        <taxon>Desulfurococcus</taxon>
    </lineage>
</organism>
<dbReference type="EC" id="4.3.3.6" evidence="1"/>
<dbReference type="EMBL" id="CP001140">
    <property type="protein sequence ID" value="ACL10808.1"/>
    <property type="molecule type" value="Genomic_DNA"/>
</dbReference>
<dbReference type="RefSeq" id="WP_012608150.1">
    <property type="nucleotide sequence ID" value="NC_011766.1"/>
</dbReference>
<dbReference type="SMR" id="B8D3X7"/>
<dbReference type="STRING" id="490899.DKAM_0482"/>
<dbReference type="GeneID" id="7170712"/>
<dbReference type="KEGG" id="dka:DKAM_0482"/>
<dbReference type="eggNOG" id="arCOG04075">
    <property type="taxonomic scope" value="Archaea"/>
</dbReference>
<dbReference type="HOGENOM" id="CLU_055352_1_0_2"/>
<dbReference type="UniPathway" id="UPA00245"/>
<dbReference type="Proteomes" id="UP000006903">
    <property type="component" value="Chromosome"/>
</dbReference>
<dbReference type="GO" id="GO:0036381">
    <property type="term" value="F:pyridoxal 5'-phosphate synthase (glutamine hydrolysing) activity"/>
    <property type="evidence" value="ECO:0007669"/>
    <property type="project" value="UniProtKB-UniRule"/>
</dbReference>
<dbReference type="GO" id="GO:0006520">
    <property type="term" value="P:amino acid metabolic process"/>
    <property type="evidence" value="ECO:0007669"/>
    <property type="project" value="TreeGrafter"/>
</dbReference>
<dbReference type="GO" id="GO:0042823">
    <property type="term" value="P:pyridoxal phosphate biosynthetic process"/>
    <property type="evidence" value="ECO:0007669"/>
    <property type="project" value="UniProtKB-UniRule"/>
</dbReference>
<dbReference type="GO" id="GO:0008615">
    <property type="term" value="P:pyridoxine biosynthetic process"/>
    <property type="evidence" value="ECO:0007669"/>
    <property type="project" value="TreeGrafter"/>
</dbReference>
<dbReference type="CDD" id="cd04727">
    <property type="entry name" value="pdxS"/>
    <property type="match status" value="1"/>
</dbReference>
<dbReference type="FunFam" id="3.20.20.70:FF:000001">
    <property type="entry name" value="Pyridoxine biosynthesis protein PDX1"/>
    <property type="match status" value="1"/>
</dbReference>
<dbReference type="Gene3D" id="3.20.20.70">
    <property type="entry name" value="Aldolase class I"/>
    <property type="match status" value="1"/>
</dbReference>
<dbReference type="HAMAP" id="MF_01824">
    <property type="entry name" value="PdxS"/>
    <property type="match status" value="1"/>
</dbReference>
<dbReference type="InterPro" id="IPR013785">
    <property type="entry name" value="Aldolase_TIM"/>
</dbReference>
<dbReference type="InterPro" id="IPR001852">
    <property type="entry name" value="PdxS/SNZ"/>
</dbReference>
<dbReference type="InterPro" id="IPR033755">
    <property type="entry name" value="PdxS/SNZ_N"/>
</dbReference>
<dbReference type="InterPro" id="IPR011060">
    <property type="entry name" value="RibuloseP-bd_barrel"/>
</dbReference>
<dbReference type="NCBIfam" id="NF003215">
    <property type="entry name" value="PRK04180.1"/>
    <property type="match status" value="1"/>
</dbReference>
<dbReference type="PANTHER" id="PTHR31829">
    <property type="entry name" value="PYRIDOXAL 5'-PHOSPHATE SYNTHASE SUBUNIT SNZ1-RELATED"/>
    <property type="match status" value="1"/>
</dbReference>
<dbReference type="PANTHER" id="PTHR31829:SF0">
    <property type="entry name" value="PYRIDOXAL 5'-PHOSPHATE SYNTHASE SUBUNIT SNZ1-RELATED"/>
    <property type="match status" value="1"/>
</dbReference>
<dbReference type="Pfam" id="PF01680">
    <property type="entry name" value="SOR_SNZ"/>
    <property type="match status" value="1"/>
</dbReference>
<dbReference type="PIRSF" id="PIRSF029271">
    <property type="entry name" value="Pdx1"/>
    <property type="match status" value="1"/>
</dbReference>
<dbReference type="SUPFAM" id="SSF51366">
    <property type="entry name" value="Ribulose-phoshate binding barrel"/>
    <property type="match status" value="1"/>
</dbReference>
<dbReference type="PROSITE" id="PS01235">
    <property type="entry name" value="PDXS_SNZ_1"/>
    <property type="match status" value="1"/>
</dbReference>
<dbReference type="PROSITE" id="PS51129">
    <property type="entry name" value="PDXS_SNZ_2"/>
    <property type="match status" value="1"/>
</dbReference>
<keyword id="KW-0456">Lyase</keyword>
<keyword id="KW-0663">Pyridoxal phosphate</keyword>
<keyword id="KW-0704">Schiff base</keyword>
<comment type="function">
    <text evidence="1">Catalyzes the formation of pyridoxal 5'-phosphate from ribose 5-phosphate (RBP), glyceraldehyde 3-phosphate (G3P) and ammonia. The ammonia is provided by the PdxT subunit. Can also use ribulose 5-phosphate and dihydroxyacetone phosphate as substrates, resulting from enzyme-catalyzed isomerization of RBP and G3P, respectively.</text>
</comment>
<comment type="catalytic activity">
    <reaction evidence="1">
        <text>aldehydo-D-ribose 5-phosphate + D-glyceraldehyde 3-phosphate + L-glutamine = pyridoxal 5'-phosphate + L-glutamate + phosphate + 3 H2O + H(+)</text>
        <dbReference type="Rhea" id="RHEA:31507"/>
        <dbReference type="ChEBI" id="CHEBI:15377"/>
        <dbReference type="ChEBI" id="CHEBI:15378"/>
        <dbReference type="ChEBI" id="CHEBI:29985"/>
        <dbReference type="ChEBI" id="CHEBI:43474"/>
        <dbReference type="ChEBI" id="CHEBI:58273"/>
        <dbReference type="ChEBI" id="CHEBI:58359"/>
        <dbReference type="ChEBI" id="CHEBI:59776"/>
        <dbReference type="ChEBI" id="CHEBI:597326"/>
        <dbReference type="EC" id="4.3.3.6"/>
    </reaction>
</comment>
<comment type="pathway">
    <text evidence="1">Cofactor biosynthesis; pyridoxal 5'-phosphate biosynthesis.</text>
</comment>
<comment type="subunit">
    <text evidence="1">In the presence of PdxT, forms a dodecamer of heterodimers.</text>
</comment>
<comment type="similarity">
    <text evidence="1">Belongs to the PdxS/SNZ family.</text>
</comment>